<dbReference type="EC" id="2.1.1.172" evidence="1"/>
<dbReference type="EMBL" id="CP000946">
    <property type="protein sequence ID" value="ACA79297.1"/>
    <property type="molecule type" value="Genomic_DNA"/>
</dbReference>
<dbReference type="RefSeq" id="WP_001272323.1">
    <property type="nucleotide sequence ID" value="NZ_MTFT01000024.1"/>
</dbReference>
<dbReference type="SMR" id="B1IS49"/>
<dbReference type="KEGG" id="ecl:EcolC_3686"/>
<dbReference type="HOGENOM" id="CLU_049581_0_1_6"/>
<dbReference type="GO" id="GO:0005737">
    <property type="term" value="C:cytoplasm"/>
    <property type="evidence" value="ECO:0007669"/>
    <property type="project" value="UniProtKB-SubCell"/>
</dbReference>
<dbReference type="GO" id="GO:0052914">
    <property type="term" value="F:16S rRNA (guanine(1207)-N(2))-methyltransferase activity"/>
    <property type="evidence" value="ECO:0007669"/>
    <property type="project" value="UniProtKB-EC"/>
</dbReference>
<dbReference type="GO" id="GO:0003676">
    <property type="term" value="F:nucleic acid binding"/>
    <property type="evidence" value="ECO:0007669"/>
    <property type="project" value="InterPro"/>
</dbReference>
<dbReference type="CDD" id="cd02440">
    <property type="entry name" value="AdoMet_MTases"/>
    <property type="match status" value="1"/>
</dbReference>
<dbReference type="FunFam" id="3.40.50.150:FF:000058">
    <property type="entry name" value="Ribosomal RNA small subunit methyltransferase C"/>
    <property type="match status" value="1"/>
</dbReference>
<dbReference type="FunFam" id="3.40.50.150:FF:000063">
    <property type="entry name" value="Ribosomal RNA small subunit methyltransferase C"/>
    <property type="match status" value="1"/>
</dbReference>
<dbReference type="Gene3D" id="3.40.50.150">
    <property type="entry name" value="Vaccinia Virus protein VP39"/>
    <property type="match status" value="2"/>
</dbReference>
<dbReference type="HAMAP" id="MF_01862">
    <property type="entry name" value="16SrRNA_methyltr_C"/>
    <property type="match status" value="1"/>
</dbReference>
<dbReference type="InterPro" id="IPR002052">
    <property type="entry name" value="DNA_methylase_N6_adenine_CS"/>
</dbReference>
<dbReference type="InterPro" id="IPR013675">
    <property type="entry name" value="Mtase_sm_N"/>
</dbReference>
<dbReference type="InterPro" id="IPR023543">
    <property type="entry name" value="rRNA_ssu_MeTfrase_C"/>
</dbReference>
<dbReference type="InterPro" id="IPR046977">
    <property type="entry name" value="RsmC/RlmG"/>
</dbReference>
<dbReference type="InterPro" id="IPR029063">
    <property type="entry name" value="SAM-dependent_MTases_sf"/>
</dbReference>
<dbReference type="InterPro" id="IPR007848">
    <property type="entry name" value="Small_mtfrase_dom"/>
</dbReference>
<dbReference type="NCBIfam" id="NF007023">
    <property type="entry name" value="PRK09489.1"/>
    <property type="match status" value="1"/>
</dbReference>
<dbReference type="PANTHER" id="PTHR47816">
    <property type="entry name" value="RIBOSOMAL RNA SMALL SUBUNIT METHYLTRANSFERASE C"/>
    <property type="match status" value="1"/>
</dbReference>
<dbReference type="PANTHER" id="PTHR47816:SF4">
    <property type="entry name" value="RIBOSOMAL RNA SMALL SUBUNIT METHYLTRANSFERASE C"/>
    <property type="match status" value="1"/>
</dbReference>
<dbReference type="Pfam" id="PF05175">
    <property type="entry name" value="MTS"/>
    <property type="match status" value="1"/>
</dbReference>
<dbReference type="Pfam" id="PF08468">
    <property type="entry name" value="MTS_N"/>
    <property type="match status" value="1"/>
</dbReference>
<dbReference type="SUPFAM" id="SSF53335">
    <property type="entry name" value="S-adenosyl-L-methionine-dependent methyltransferases"/>
    <property type="match status" value="1"/>
</dbReference>
<comment type="function">
    <text evidence="1">Specifically methylates the guanine in position 1207 of 16S rRNA in the 30S particle.</text>
</comment>
<comment type="catalytic activity">
    <reaction evidence="1">
        <text>guanosine(1207) in 16S rRNA + S-adenosyl-L-methionine = N(2)-methylguanosine(1207) in 16S rRNA + S-adenosyl-L-homocysteine + H(+)</text>
        <dbReference type="Rhea" id="RHEA:42736"/>
        <dbReference type="Rhea" id="RHEA-COMP:10213"/>
        <dbReference type="Rhea" id="RHEA-COMP:10214"/>
        <dbReference type="ChEBI" id="CHEBI:15378"/>
        <dbReference type="ChEBI" id="CHEBI:57856"/>
        <dbReference type="ChEBI" id="CHEBI:59789"/>
        <dbReference type="ChEBI" id="CHEBI:74269"/>
        <dbReference type="ChEBI" id="CHEBI:74481"/>
        <dbReference type="EC" id="2.1.1.172"/>
    </reaction>
</comment>
<comment type="subunit">
    <text evidence="1">Monomer.</text>
</comment>
<comment type="subcellular location">
    <subcellularLocation>
        <location evidence="1">Cytoplasm</location>
    </subcellularLocation>
</comment>
<comment type="similarity">
    <text evidence="1">Belongs to the methyltransferase superfamily. RsmC family.</text>
</comment>
<protein>
    <recommendedName>
        <fullName evidence="1">Ribosomal RNA small subunit methyltransferase C</fullName>
        <ecNumber evidence="1">2.1.1.172</ecNumber>
    </recommendedName>
    <alternativeName>
        <fullName evidence="1">16S rRNA m2G1207 methyltransferase</fullName>
    </alternativeName>
    <alternativeName>
        <fullName evidence="1">rRNA (guanine-N(2)-)-methyltransferase RsmC</fullName>
    </alternativeName>
</protein>
<feature type="chain" id="PRO_0000369699" description="Ribosomal RNA small subunit methyltransferase C">
    <location>
        <begin position="1"/>
        <end position="343"/>
    </location>
</feature>
<accession>B1IS49</accession>
<gene>
    <name evidence="1" type="primary">rsmC</name>
    <name type="ordered locus">EcolC_3686</name>
</gene>
<reference key="1">
    <citation type="submission" date="2008-02" db="EMBL/GenBank/DDBJ databases">
        <title>Complete sequence of Escherichia coli C str. ATCC 8739.</title>
        <authorList>
            <person name="Copeland A."/>
            <person name="Lucas S."/>
            <person name="Lapidus A."/>
            <person name="Glavina del Rio T."/>
            <person name="Dalin E."/>
            <person name="Tice H."/>
            <person name="Bruce D."/>
            <person name="Goodwin L."/>
            <person name="Pitluck S."/>
            <person name="Kiss H."/>
            <person name="Brettin T."/>
            <person name="Detter J.C."/>
            <person name="Han C."/>
            <person name="Kuske C.R."/>
            <person name="Schmutz J."/>
            <person name="Larimer F."/>
            <person name="Land M."/>
            <person name="Hauser L."/>
            <person name="Kyrpides N."/>
            <person name="Mikhailova N."/>
            <person name="Ingram L."/>
            <person name="Richardson P."/>
        </authorList>
    </citation>
    <scope>NUCLEOTIDE SEQUENCE [LARGE SCALE GENOMIC DNA]</scope>
    <source>
        <strain>ATCC 8739 / DSM 1576 / NBRC 3972 / NCIMB 8545 / WDCM 00012 / Crooks</strain>
    </source>
</reference>
<keyword id="KW-0963">Cytoplasm</keyword>
<keyword id="KW-0489">Methyltransferase</keyword>
<keyword id="KW-0698">rRNA processing</keyword>
<keyword id="KW-0949">S-adenosyl-L-methionine</keyword>
<keyword id="KW-0808">Transferase</keyword>
<sequence length="343" mass="37611">MSAFTPASEVLLRHSDDFEQSRILFAGDLQDDLPARLDTAASRAHTQQFHHWQVLSRQMGDNARFSLVATADDVADCDTLIYYWPKNKPEAQFQLMNLLSLLPVGTDIFVVGENRSGVRSAEQMLADYAPLNKVDSARRCGLYFGRLEKQPVFDADKFWGEYSVDGLTVKTLPGVFSRDGLDVGSQLLLSTLTPHTKGKVLDVGCGAGVLSVAFARHSPKIRLTLCDVSAPAVEASRATLAANGVEGEVFASNVFSEVKGRFDMIISNPPFHDGMQTSLDAAQTLIRGAVRHLNSGGELRIVANAFLPYPDVLDETFGFHEVIAQTGRFKVYRAIMTRQAKKG</sequence>
<name>RSMC_ECOLC</name>
<evidence type="ECO:0000255" key="1">
    <source>
        <dbReference type="HAMAP-Rule" id="MF_01862"/>
    </source>
</evidence>
<proteinExistence type="inferred from homology"/>
<organism>
    <name type="scientific">Escherichia coli (strain ATCC 8739 / DSM 1576 / NBRC 3972 / NCIMB 8545 / WDCM 00012 / Crooks)</name>
    <dbReference type="NCBI Taxonomy" id="481805"/>
    <lineage>
        <taxon>Bacteria</taxon>
        <taxon>Pseudomonadati</taxon>
        <taxon>Pseudomonadota</taxon>
        <taxon>Gammaproteobacteria</taxon>
        <taxon>Enterobacterales</taxon>
        <taxon>Enterobacteriaceae</taxon>
        <taxon>Escherichia</taxon>
    </lineage>
</organism>